<organism>
    <name type="scientific">Streptococcus pneumoniae (strain ATCC 700669 / Spain 23F-1)</name>
    <dbReference type="NCBI Taxonomy" id="561276"/>
    <lineage>
        <taxon>Bacteria</taxon>
        <taxon>Bacillati</taxon>
        <taxon>Bacillota</taxon>
        <taxon>Bacilli</taxon>
        <taxon>Lactobacillales</taxon>
        <taxon>Streptococcaceae</taxon>
        <taxon>Streptococcus</taxon>
    </lineage>
</organism>
<protein>
    <recommendedName>
        <fullName evidence="1">Nucleoside triphosphate/diphosphate phosphatase</fullName>
        <ecNumber evidence="1">3.6.1.15</ecNumber>
        <ecNumber evidence="1">3.6.1.6</ecNumber>
    </recommendedName>
</protein>
<evidence type="ECO:0000255" key="1">
    <source>
        <dbReference type="HAMAP-Rule" id="MF_01568"/>
    </source>
</evidence>
<proteinExistence type="inferred from homology"/>
<gene>
    <name type="ordered locus">SPN23F19250</name>
</gene>
<name>NTDP_STRPJ</name>
<feature type="chain" id="PRO_1000185476" description="Nucleoside triphosphate/diphosphate phosphatase">
    <location>
        <begin position="1"/>
        <end position="177"/>
    </location>
</feature>
<feature type="active site" description="Proton donor" evidence="1">
    <location>
        <position position="23"/>
    </location>
</feature>
<feature type="binding site" evidence="1">
    <location>
        <position position="87"/>
    </location>
    <ligand>
        <name>Mg(2+)</name>
        <dbReference type="ChEBI" id="CHEBI:18420"/>
        <label>1</label>
    </ligand>
</feature>
<feature type="binding site" evidence="1">
    <location>
        <position position="103"/>
    </location>
    <ligand>
        <name>Mg(2+)</name>
        <dbReference type="ChEBI" id="CHEBI:18420"/>
        <label>1</label>
    </ligand>
</feature>
<feature type="binding site" evidence="1">
    <location>
        <position position="105"/>
    </location>
    <ligand>
        <name>Mg(2+)</name>
        <dbReference type="ChEBI" id="CHEBI:18420"/>
        <label>2</label>
    </ligand>
</feature>
<feature type="binding site" evidence="1">
    <location>
        <position position="107"/>
    </location>
    <ligand>
        <name>Mg(2+)</name>
        <dbReference type="ChEBI" id="CHEBI:18420"/>
        <label>1</label>
    </ligand>
</feature>
<feature type="binding site" evidence="1">
    <location>
        <position position="107"/>
    </location>
    <ligand>
        <name>Mg(2+)</name>
        <dbReference type="ChEBI" id="CHEBI:18420"/>
        <label>2</label>
    </ligand>
</feature>
<feature type="binding site" evidence="1">
    <location>
        <position position="120"/>
    </location>
    <ligand>
        <name>Mg(2+)</name>
        <dbReference type="ChEBI" id="CHEBI:18420"/>
        <label>2</label>
    </ligand>
</feature>
<feature type="binding site" evidence="1">
    <location>
        <position position="123"/>
    </location>
    <ligand>
        <name>Mg(2+)</name>
        <dbReference type="ChEBI" id="CHEBI:18420"/>
        <label>2</label>
    </ligand>
</feature>
<keyword id="KW-0378">Hydrolase</keyword>
<keyword id="KW-0460">Magnesium</keyword>
<keyword id="KW-0479">Metal-binding</keyword>
<dbReference type="EC" id="3.6.1.15" evidence="1"/>
<dbReference type="EC" id="3.6.1.6" evidence="1"/>
<dbReference type="EMBL" id="FM211187">
    <property type="protein sequence ID" value="CAR69681.1"/>
    <property type="molecule type" value="Genomic_DNA"/>
</dbReference>
<dbReference type="RefSeq" id="WP_000775323.1">
    <property type="nucleotide sequence ID" value="NC_011900.1"/>
</dbReference>
<dbReference type="SMR" id="B8ZNK8"/>
<dbReference type="KEGG" id="sne:SPN23F19250"/>
<dbReference type="HOGENOM" id="CLU_109787_1_0_9"/>
<dbReference type="GO" id="GO:0000287">
    <property type="term" value="F:magnesium ion binding"/>
    <property type="evidence" value="ECO:0007669"/>
    <property type="project" value="UniProtKB-UniRule"/>
</dbReference>
<dbReference type="GO" id="GO:0017110">
    <property type="term" value="F:nucleoside diphosphate phosphatase activity"/>
    <property type="evidence" value="ECO:0007669"/>
    <property type="project" value="UniProtKB-UniRule"/>
</dbReference>
<dbReference type="GO" id="GO:0017111">
    <property type="term" value="F:ribonucleoside triphosphate phosphatase activity"/>
    <property type="evidence" value="ECO:0007669"/>
    <property type="project" value="UniProtKB-UniRule"/>
</dbReference>
<dbReference type="Gene3D" id="2.40.380.10">
    <property type="entry name" value="FomD-like"/>
    <property type="match status" value="1"/>
</dbReference>
<dbReference type="HAMAP" id="MF_01568">
    <property type="entry name" value="Ntdp"/>
    <property type="match status" value="1"/>
</dbReference>
<dbReference type="InterPro" id="IPR007295">
    <property type="entry name" value="DUF402"/>
</dbReference>
<dbReference type="InterPro" id="IPR035930">
    <property type="entry name" value="FomD-like_sf"/>
</dbReference>
<dbReference type="InterPro" id="IPR050212">
    <property type="entry name" value="Ntdp-like"/>
</dbReference>
<dbReference type="InterPro" id="IPR016882">
    <property type="entry name" value="SA1684"/>
</dbReference>
<dbReference type="NCBIfam" id="NF010183">
    <property type="entry name" value="PRK13662.1"/>
    <property type="match status" value="1"/>
</dbReference>
<dbReference type="PANTHER" id="PTHR39159">
    <property type="match status" value="1"/>
</dbReference>
<dbReference type="PANTHER" id="PTHR39159:SF1">
    <property type="entry name" value="UPF0374 PROTEIN YGAC"/>
    <property type="match status" value="1"/>
</dbReference>
<dbReference type="Pfam" id="PF04167">
    <property type="entry name" value="DUF402"/>
    <property type="match status" value="1"/>
</dbReference>
<dbReference type="PIRSF" id="PIRSF028345">
    <property type="entry name" value="UCP028345"/>
    <property type="match status" value="1"/>
</dbReference>
<dbReference type="SUPFAM" id="SSF159234">
    <property type="entry name" value="FomD-like"/>
    <property type="match status" value="1"/>
</dbReference>
<sequence length="177" mass="21306">MKLPKEGDFITIQSYKHDGSLHRTWRDTMVLKTTENAIIGVNDHTLVTESDGRRWVTREPAIVYFHKKYWFNIIAMIRDNGTSYYCNVASPYYLDEEALKYIDYDLDVKIFTDGEKRLLDVEEYERHKRKMNYSDDLDYILKEHVKILVDWINNGRGPFSEAYVNIWYKRYVELKNR</sequence>
<comment type="function">
    <text evidence="1">Has nucleoside phosphatase activity towards nucleoside triphosphates and nucleoside diphosphates.</text>
</comment>
<comment type="catalytic activity">
    <reaction evidence="1">
        <text>a ribonucleoside 5'-triphosphate + H2O = a ribonucleoside 5'-diphosphate + phosphate + H(+)</text>
        <dbReference type="Rhea" id="RHEA:23680"/>
        <dbReference type="ChEBI" id="CHEBI:15377"/>
        <dbReference type="ChEBI" id="CHEBI:15378"/>
        <dbReference type="ChEBI" id="CHEBI:43474"/>
        <dbReference type="ChEBI" id="CHEBI:57930"/>
        <dbReference type="ChEBI" id="CHEBI:61557"/>
        <dbReference type="EC" id="3.6.1.15"/>
    </reaction>
</comment>
<comment type="catalytic activity">
    <reaction evidence="1">
        <text>a ribonucleoside 5'-diphosphate + H2O = a ribonucleoside 5'-phosphate + phosphate + H(+)</text>
        <dbReference type="Rhea" id="RHEA:36799"/>
        <dbReference type="ChEBI" id="CHEBI:15377"/>
        <dbReference type="ChEBI" id="CHEBI:15378"/>
        <dbReference type="ChEBI" id="CHEBI:43474"/>
        <dbReference type="ChEBI" id="CHEBI:57930"/>
        <dbReference type="ChEBI" id="CHEBI:58043"/>
        <dbReference type="EC" id="3.6.1.6"/>
    </reaction>
</comment>
<comment type="cofactor">
    <cofactor evidence="1">
        <name>Mg(2+)</name>
        <dbReference type="ChEBI" id="CHEBI:18420"/>
    </cofactor>
</comment>
<comment type="similarity">
    <text evidence="1">Belongs to the Ntdp family.</text>
</comment>
<accession>B8ZNK8</accession>
<reference key="1">
    <citation type="journal article" date="2009" name="J. Bacteriol.">
        <title>Role of conjugative elements in the evolution of the multidrug-resistant pandemic clone Streptococcus pneumoniae Spain23F ST81.</title>
        <authorList>
            <person name="Croucher N.J."/>
            <person name="Walker D."/>
            <person name="Romero P."/>
            <person name="Lennard N."/>
            <person name="Paterson G.K."/>
            <person name="Bason N.C."/>
            <person name="Mitchell A.M."/>
            <person name="Quail M.A."/>
            <person name="Andrew P.W."/>
            <person name="Parkhill J."/>
            <person name="Bentley S.D."/>
            <person name="Mitchell T.J."/>
        </authorList>
    </citation>
    <scope>NUCLEOTIDE SEQUENCE [LARGE SCALE GENOMIC DNA]</scope>
    <source>
        <strain>ATCC 700669 / Spain 23F-1</strain>
    </source>
</reference>